<feature type="chain" id="PRO_1000095740" description="Tryptophan synthase alpha chain">
    <location>
        <begin position="1"/>
        <end position="269"/>
    </location>
</feature>
<feature type="active site" description="Proton acceptor" evidence="1">
    <location>
        <position position="49"/>
    </location>
</feature>
<feature type="active site" description="Proton acceptor" evidence="1">
    <location>
        <position position="60"/>
    </location>
</feature>
<keyword id="KW-0028">Amino-acid biosynthesis</keyword>
<keyword id="KW-0057">Aromatic amino acid biosynthesis</keyword>
<keyword id="KW-0456">Lyase</keyword>
<keyword id="KW-1185">Reference proteome</keyword>
<keyword id="KW-0822">Tryptophan biosynthesis</keyword>
<protein>
    <recommendedName>
        <fullName evidence="1">Tryptophan synthase alpha chain</fullName>
        <ecNumber evidence="1">4.2.1.20</ecNumber>
    </recommendedName>
</protein>
<organism>
    <name type="scientific">Proteus mirabilis (strain HI4320)</name>
    <dbReference type="NCBI Taxonomy" id="529507"/>
    <lineage>
        <taxon>Bacteria</taxon>
        <taxon>Pseudomonadati</taxon>
        <taxon>Pseudomonadota</taxon>
        <taxon>Gammaproteobacteria</taxon>
        <taxon>Enterobacterales</taxon>
        <taxon>Morganellaceae</taxon>
        <taxon>Proteus</taxon>
    </lineage>
</organism>
<sequence length="269" mass="28810">MSRYQLCFEALAQKQQGAFVPFVTLGDPDAELSLKIIDALIEGGADALEIGIPFSDPLADGPTIQGANLRALNANVTPTLCFELLSQIRQKHPTIPIGLLVYANLVFSNGVDNFYHKCQQAGVDSVLIGDVPLREAKQFREAALSANIAPIFICPPNADDELLQELATSAEGYTYLLSRAGVTGTDKRAEQSLTHLTSKLKAYNAPPALQGFGISEPQQVSQAISNGAFGAISGSAVVQIIENNLHQPDVMLKMLTQFVQQMKAATISV</sequence>
<reference key="1">
    <citation type="journal article" date="2008" name="J. Bacteriol.">
        <title>Complete genome sequence of uropathogenic Proteus mirabilis, a master of both adherence and motility.</title>
        <authorList>
            <person name="Pearson M.M."/>
            <person name="Sebaihia M."/>
            <person name="Churcher C."/>
            <person name="Quail M.A."/>
            <person name="Seshasayee A.S."/>
            <person name="Luscombe N.M."/>
            <person name="Abdellah Z."/>
            <person name="Arrosmith C."/>
            <person name="Atkin B."/>
            <person name="Chillingworth T."/>
            <person name="Hauser H."/>
            <person name="Jagels K."/>
            <person name="Moule S."/>
            <person name="Mungall K."/>
            <person name="Norbertczak H."/>
            <person name="Rabbinowitsch E."/>
            <person name="Walker D."/>
            <person name="Whithead S."/>
            <person name="Thomson N.R."/>
            <person name="Rather P.N."/>
            <person name="Parkhill J."/>
            <person name="Mobley H.L.T."/>
        </authorList>
    </citation>
    <scope>NUCLEOTIDE SEQUENCE [LARGE SCALE GENOMIC DNA]</scope>
    <source>
        <strain>HI4320</strain>
    </source>
</reference>
<gene>
    <name evidence="1" type="primary">trpA</name>
    <name type="ordered locus">PMI1348</name>
</gene>
<name>TRPA_PROMH</name>
<evidence type="ECO:0000255" key="1">
    <source>
        <dbReference type="HAMAP-Rule" id="MF_00131"/>
    </source>
</evidence>
<dbReference type="EC" id="4.2.1.20" evidence="1"/>
<dbReference type="EMBL" id="AM942759">
    <property type="protein sequence ID" value="CAR42850.1"/>
    <property type="molecule type" value="Genomic_DNA"/>
</dbReference>
<dbReference type="RefSeq" id="WP_004243068.1">
    <property type="nucleotide sequence ID" value="NC_010554.1"/>
</dbReference>
<dbReference type="SMR" id="B4EWH8"/>
<dbReference type="EnsemblBacteria" id="CAR42850">
    <property type="protein sequence ID" value="CAR42850"/>
    <property type="gene ID" value="PMI1348"/>
</dbReference>
<dbReference type="GeneID" id="6802617"/>
<dbReference type="KEGG" id="pmr:PMI1348"/>
<dbReference type="eggNOG" id="COG0159">
    <property type="taxonomic scope" value="Bacteria"/>
</dbReference>
<dbReference type="HOGENOM" id="CLU_016734_0_4_6"/>
<dbReference type="UniPathway" id="UPA00035">
    <property type="reaction ID" value="UER00044"/>
</dbReference>
<dbReference type="Proteomes" id="UP000008319">
    <property type="component" value="Chromosome"/>
</dbReference>
<dbReference type="GO" id="GO:0005829">
    <property type="term" value="C:cytosol"/>
    <property type="evidence" value="ECO:0007669"/>
    <property type="project" value="TreeGrafter"/>
</dbReference>
<dbReference type="GO" id="GO:0004834">
    <property type="term" value="F:tryptophan synthase activity"/>
    <property type="evidence" value="ECO:0007669"/>
    <property type="project" value="UniProtKB-UniRule"/>
</dbReference>
<dbReference type="CDD" id="cd04724">
    <property type="entry name" value="Tryptophan_synthase_alpha"/>
    <property type="match status" value="1"/>
</dbReference>
<dbReference type="FunFam" id="3.20.20.70:FF:000037">
    <property type="entry name" value="Tryptophan synthase alpha chain"/>
    <property type="match status" value="1"/>
</dbReference>
<dbReference type="Gene3D" id="3.20.20.70">
    <property type="entry name" value="Aldolase class I"/>
    <property type="match status" value="1"/>
</dbReference>
<dbReference type="HAMAP" id="MF_00131">
    <property type="entry name" value="Trp_synth_alpha"/>
    <property type="match status" value="1"/>
</dbReference>
<dbReference type="InterPro" id="IPR013785">
    <property type="entry name" value="Aldolase_TIM"/>
</dbReference>
<dbReference type="InterPro" id="IPR011060">
    <property type="entry name" value="RibuloseP-bd_barrel"/>
</dbReference>
<dbReference type="InterPro" id="IPR018204">
    <property type="entry name" value="Trp_synthase_alpha_AS"/>
</dbReference>
<dbReference type="InterPro" id="IPR002028">
    <property type="entry name" value="Trp_synthase_suA"/>
</dbReference>
<dbReference type="NCBIfam" id="TIGR00262">
    <property type="entry name" value="trpA"/>
    <property type="match status" value="1"/>
</dbReference>
<dbReference type="PANTHER" id="PTHR43406:SF1">
    <property type="entry name" value="TRYPTOPHAN SYNTHASE ALPHA CHAIN, CHLOROPLASTIC"/>
    <property type="match status" value="1"/>
</dbReference>
<dbReference type="PANTHER" id="PTHR43406">
    <property type="entry name" value="TRYPTOPHAN SYNTHASE, ALPHA CHAIN"/>
    <property type="match status" value="1"/>
</dbReference>
<dbReference type="Pfam" id="PF00290">
    <property type="entry name" value="Trp_syntA"/>
    <property type="match status" value="1"/>
</dbReference>
<dbReference type="SUPFAM" id="SSF51366">
    <property type="entry name" value="Ribulose-phoshate binding barrel"/>
    <property type="match status" value="1"/>
</dbReference>
<dbReference type="PROSITE" id="PS00167">
    <property type="entry name" value="TRP_SYNTHASE_ALPHA"/>
    <property type="match status" value="1"/>
</dbReference>
<proteinExistence type="inferred from homology"/>
<accession>B4EWH8</accession>
<comment type="function">
    <text evidence="1">The alpha subunit is responsible for the aldol cleavage of indoleglycerol phosphate to indole and glyceraldehyde 3-phosphate.</text>
</comment>
<comment type="catalytic activity">
    <reaction evidence="1">
        <text>(1S,2R)-1-C-(indol-3-yl)glycerol 3-phosphate + L-serine = D-glyceraldehyde 3-phosphate + L-tryptophan + H2O</text>
        <dbReference type="Rhea" id="RHEA:10532"/>
        <dbReference type="ChEBI" id="CHEBI:15377"/>
        <dbReference type="ChEBI" id="CHEBI:33384"/>
        <dbReference type="ChEBI" id="CHEBI:57912"/>
        <dbReference type="ChEBI" id="CHEBI:58866"/>
        <dbReference type="ChEBI" id="CHEBI:59776"/>
        <dbReference type="EC" id="4.2.1.20"/>
    </reaction>
</comment>
<comment type="pathway">
    <text evidence="1">Amino-acid biosynthesis; L-tryptophan biosynthesis; L-tryptophan from chorismate: step 5/5.</text>
</comment>
<comment type="subunit">
    <text evidence="1">Tetramer of two alpha and two beta chains.</text>
</comment>
<comment type="similarity">
    <text evidence="1">Belongs to the TrpA family.</text>
</comment>